<accession>Q0G9K9</accession>
<sequence>MTDFNLPSIFVPLVGLVFPAIAMASLSLHVQKNKIV</sequence>
<comment type="function">
    <text evidence="1">May help in the organization of the PsaL subunit.</text>
</comment>
<comment type="subcellular location">
    <subcellularLocation>
        <location evidence="1">Plastid</location>
        <location evidence="1">Chloroplast thylakoid membrane</location>
        <topology evidence="1">Single-pass membrane protein</topology>
    </subcellularLocation>
</comment>
<comment type="similarity">
    <text evidence="1">Belongs to the PsaI family.</text>
</comment>
<dbReference type="EMBL" id="DQ899947">
    <property type="protein sequence ID" value="ABI32519.1"/>
    <property type="molecule type" value="Genomic_DNA"/>
</dbReference>
<dbReference type="RefSeq" id="YP_740212.1">
    <property type="nucleotide sequence ID" value="NC_008326.1"/>
</dbReference>
<dbReference type="SMR" id="Q0G9K9"/>
<dbReference type="GeneID" id="4266634"/>
<dbReference type="GO" id="GO:0009535">
    <property type="term" value="C:chloroplast thylakoid membrane"/>
    <property type="evidence" value="ECO:0007669"/>
    <property type="project" value="UniProtKB-SubCell"/>
</dbReference>
<dbReference type="GO" id="GO:0009522">
    <property type="term" value="C:photosystem I"/>
    <property type="evidence" value="ECO:0007669"/>
    <property type="project" value="UniProtKB-KW"/>
</dbReference>
<dbReference type="GO" id="GO:0015979">
    <property type="term" value="P:photosynthesis"/>
    <property type="evidence" value="ECO:0007669"/>
    <property type="project" value="UniProtKB-UniRule"/>
</dbReference>
<dbReference type="HAMAP" id="MF_00431">
    <property type="entry name" value="PSI_PsaI"/>
    <property type="match status" value="1"/>
</dbReference>
<dbReference type="InterPro" id="IPR001302">
    <property type="entry name" value="PSI_PsaI"/>
</dbReference>
<dbReference type="InterPro" id="IPR036357">
    <property type="entry name" value="PSI_PsaI_sf"/>
</dbReference>
<dbReference type="NCBIfam" id="TIGR03052">
    <property type="entry name" value="PS_I_psaI"/>
    <property type="match status" value="1"/>
</dbReference>
<dbReference type="PANTHER" id="PTHR35775">
    <property type="match status" value="1"/>
</dbReference>
<dbReference type="PANTHER" id="PTHR35775:SF2">
    <property type="entry name" value="PHOTOSYSTEM I REACTION CENTER SUBUNIT VIII"/>
    <property type="match status" value="1"/>
</dbReference>
<dbReference type="Pfam" id="PF00796">
    <property type="entry name" value="PSI_8"/>
    <property type="match status" value="1"/>
</dbReference>
<dbReference type="SUPFAM" id="SSF81540">
    <property type="entry name" value="Subunit VIII of photosystem I reaction centre, PsaI"/>
    <property type="match status" value="1"/>
</dbReference>
<organism>
    <name type="scientific">Liriodendron tulipifera</name>
    <name type="common">Tuliptree</name>
    <name type="synonym">Tulip poplar</name>
    <dbReference type="NCBI Taxonomy" id="3415"/>
    <lineage>
        <taxon>Eukaryota</taxon>
        <taxon>Viridiplantae</taxon>
        <taxon>Streptophyta</taxon>
        <taxon>Embryophyta</taxon>
        <taxon>Tracheophyta</taxon>
        <taxon>Spermatophyta</taxon>
        <taxon>Magnoliopsida</taxon>
        <taxon>Magnoliidae</taxon>
        <taxon>Magnoliales</taxon>
        <taxon>Magnoliaceae</taxon>
        <taxon>Liriodendron</taxon>
    </lineage>
</organism>
<geneLocation type="chloroplast"/>
<gene>
    <name evidence="1" type="primary">psaI</name>
</gene>
<feature type="chain" id="PRO_0000276026" description="Photosystem I reaction center subunit VIII">
    <location>
        <begin position="1"/>
        <end position="36"/>
    </location>
</feature>
<feature type="transmembrane region" description="Helical" evidence="1">
    <location>
        <begin position="6"/>
        <end position="26"/>
    </location>
</feature>
<proteinExistence type="inferred from homology"/>
<keyword id="KW-0150">Chloroplast</keyword>
<keyword id="KW-0472">Membrane</keyword>
<keyword id="KW-0602">Photosynthesis</keyword>
<keyword id="KW-0603">Photosystem I</keyword>
<keyword id="KW-0934">Plastid</keyword>
<keyword id="KW-0793">Thylakoid</keyword>
<keyword id="KW-0812">Transmembrane</keyword>
<keyword id="KW-1133">Transmembrane helix</keyword>
<protein>
    <recommendedName>
        <fullName evidence="1">Photosystem I reaction center subunit VIII</fullName>
        <shortName evidence="1">PSI-I</shortName>
    </recommendedName>
</protein>
<name>PSAI_LIRTU</name>
<evidence type="ECO:0000255" key="1">
    <source>
        <dbReference type="HAMAP-Rule" id="MF_00431"/>
    </source>
</evidence>
<reference key="1">
    <citation type="journal article" date="2006" name="BMC Evol. Biol.">
        <title>Complete plastid genome sequences of Drimys, Liriodendron, and Piper: implications for the phylogenetic relationships of magnoliids.</title>
        <authorList>
            <person name="Cai Z."/>
            <person name="Penaflor C."/>
            <person name="Kuehl J.V."/>
            <person name="Leebens-Mack J."/>
            <person name="Carlson J.E."/>
            <person name="dePamphilis C.W."/>
            <person name="Boore J.L."/>
            <person name="Jansen R.K."/>
        </authorList>
    </citation>
    <scope>NUCLEOTIDE SEQUENCE [LARGE SCALE GENOMIC DNA]</scope>
</reference>